<name>KPYK_CHLPN</name>
<feature type="chain" id="PRO_0000112062" description="Pyruvate kinase">
    <location>
        <begin position="1"/>
        <end position="484"/>
    </location>
</feature>
<feature type="binding site" evidence="1">
    <location>
        <position position="33"/>
    </location>
    <ligand>
        <name>substrate</name>
    </ligand>
</feature>
<feature type="binding site" evidence="2">
    <location>
        <begin position="35"/>
        <end position="38"/>
    </location>
    <ligand>
        <name>ATP</name>
        <dbReference type="ChEBI" id="CHEBI:30616"/>
    </ligand>
</feature>
<feature type="binding site" evidence="1">
    <location>
        <position position="35"/>
    </location>
    <ligand>
        <name>K(+)</name>
        <dbReference type="ChEBI" id="CHEBI:29103"/>
    </ligand>
</feature>
<feature type="binding site" evidence="1">
    <location>
        <position position="37"/>
    </location>
    <ligand>
        <name>K(+)</name>
        <dbReference type="ChEBI" id="CHEBI:29103"/>
    </ligand>
</feature>
<feature type="binding site" evidence="1">
    <location>
        <position position="67"/>
    </location>
    <ligand>
        <name>K(+)</name>
        <dbReference type="ChEBI" id="CHEBI:29103"/>
    </ligand>
</feature>
<feature type="binding site" evidence="1">
    <location>
        <position position="68"/>
    </location>
    <ligand>
        <name>K(+)</name>
        <dbReference type="ChEBI" id="CHEBI:29103"/>
    </ligand>
</feature>
<feature type="binding site" evidence="2">
    <location>
        <position position="74"/>
    </location>
    <ligand>
        <name>ATP</name>
        <dbReference type="ChEBI" id="CHEBI:30616"/>
    </ligand>
</feature>
<feature type="binding site" evidence="2">
    <location>
        <position position="155"/>
    </location>
    <ligand>
        <name>ATP</name>
        <dbReference type="ChEBI" id="CHEBI:30616"/>
    </ligand>
</feature>
<feature type="binding site" evidence="1">
    <location>
        <position position="221"/>
    </location>
    <ligand>
        <name>Mg(2+)</name>
        <dbReference type="ChEBI" id="CHEBI:18420"/>
    </ligand>
</feature>
<feature type="binding site" evidence="1">
    <location>
        <position position="244"/>
    </location>
    <ligand>
        <name>substrate</name>
    </ligand>
</feature>
<feature type="binding site" evidence="1">
    <location>
        <position position="245"/>
    </location>
    <ligand>
        <name>Mg(2+)</name>
        <dbReference type="ChEBI" id="CHEBI:18420"/>
    </ligand>
</feature>
<feature type="binding site" evidence="1">
    <location>
        <position position="245"/>
    </location>
    <ligand>
        <name>substrate</name>
    </ligand>
</feature>
<feature type="binding site" evidence="1">
    <location>
        <position position="277"/>
    </location>
    <ligand>
        <name>substrate</name>
    </ligand>
</feature>
<feature type="site" description="Transition state stabilizer" evidence="1">
    <location>
        <position position="219"/>
    </location>
</feature>
<feature type="sequence conflict" description="In Ref. 3; BAA98307." evidence="3" ref="3">
    <original>V</original>
    <variation>N</variation>
    <location>
        <position position="188"/>
    </location>
</feature>
<accession>Q9Z984</accession>
<accession>Q9JSJ4</accession>
<organism>
    <name type="scientific">Chlamydia pneumoniae</name>
    <name type="common">Chlamydophila pneumoniae</name>
    <dbReference type="NCBI Taxonomy" id="83558"/>
    <lineage>
        <taxon>Bacteria</taxon>
        <taxon>Pseudomonadati</taxon>
        <taxon>Chlamydiota</taxon>
        <taxon>Chlamydiia</taxon>
        <taxon>Chlamydiales</taxon>
        <taxon>Chlamydiaceae</taxon>
        <taxon>Chlamydia/Chlamydophila group</taxon>
        <taxon>Chlamydia</taxon>
    </lineage>
</organism>
<reference key="1">
    <citation type="journal article" date="1999" name="Nat. Genet.">
        <title>Comparative genomes of Chlamydia pneumoniae and C. trachomatis.</title>
        <authorList>
            <person name="Kalman S."/>
            <person name="Mitchell W.P."/>
            <person name="Marathe R."/>
            <person name="Lammel C.J."/>
            <person name="Fan J."/>
            <person name="Hyman R.W."/>
            <person name="Olinger L."/>
            <person name="Grimwood J."/>
            <person name="Davis R.W."/>
            <person name="Stephens R.S."/>
        </authorList>
    </citation>
    <scope>NUCLEOTIDE SEQUENCE [LARGE SCALE GENOMIC DNA]</scope>
    <source>
        <strain>CWL029</strain>
    </source>
</reference>
<reference key="2">
    <citation type="journal article" date="2000" name="Nucleic Acids Res.">
        <title>Genome sequences of Chlamydia trachomatis MoPn and Chlamydia pneumoniae AR39.</title>
        <authorList>
            <person name="Read T.D."/>
            <person name="Brunham R.C."/>
            <person name="Shen C."/>
            <person name="Gill S.R."/>
            <person name="Heidelberg J.F."/>
            <person name="White O."/>
            <person name="Hickey E.K."/>
            <person name="Peterson J.D."/>
            <person name="Utterback T.R."/>
            <person name="Berry K.J."/>
            <person name="Bass S."/>
            <person name="Linher K.D."/>
            <person name="Weidman J.F."/>
            <person name="Khouri H.M."/>
            <person name="Craven B."/>
            <person name="Bowman C."/>
            <person name="Dodson R.J."/>
            <person name="Gwinn M.L."/>
            <person name="Nelson W.C."/>
            <person name="DeBoy R.T."/>
            <person name="Kolonay J.F."/>
            <person name="McClarty G."/>
            <person name="Salzberg S.L."/>
            <person name="Eisen J.A."/>
            <person name="Fraser C.M."/>
        </authorList>
    </citation>
    <scope>NUCLEOTIDE SEQUENCE [LARGE SCALE GENOMIC DNA]</scope>
    <source>
        <strain>AR39</strain>
    </source>
</reference>
<reference key="3">
    <citation type="journal article" date="2000" name="Nucleic Acids Res.">
        <title>Comparison of whole genome sequences of Chlamydia pneumoniae J138 from Japan and CWL029 from USA.</title>
        <authorList>
            <person name="Shirai M."/>
            <person name="Hirakawa H."/>
            <person name="Kimoto M."/>
            <person name="Tabuchi M."/>
            <person name="Kishi F."/>
            <person name="Ouchi K."/>
            <person name="Shiba T."/>
            <person name="Ishii K."/>
            <person name="Hattori M."/>
            <person name="Kuhara S."/>
            <person name="Nakazawa T."/>
        </authorList>
    </citation>
    <scope>NUCLEOTIDE SEQUENCE [LARGE SCALE GENOMIC DNA]</scope>
    <source>
        <strain>J138</strain>
    </source>
</reference>
<reference key="4">
    <citation type="submission" date="2002-05" db="EMBL/GenBank/DDBJ databases">
        <title>The genome sequence of Chlamydia pneumoniae TW183 and comparison with other Chlamydia strains based on whole genome sequence analysis.</title>
        <authorList>
            <person name="Geng M.M."/>
            <person name="Schuhmacher A."/>
            <person name="Muehldorfer I."/>
            <person name="Bensch K.W."/>
            <person name="Schaefer K.P."/>
            <person name="Schneider S."/>
            <person name="Pohl T."/>
            <person name="Essig A."/>
            <person name="Marre R."/>
            <person name="Melchers K."/>
        </authorList>
    </citation>
    <scope>NUCLEOTIDE SEQUENCE [LARGE SCALE GENOMIC DNA]</scope>
    <source>
        <strain>TW-183</strain>
    </source>
</reference>
<comment type="catalytic activity">
    <reaction>
        <text>pyruvate + ATP = phosphoenolpyruvate + ADP + H(+)</text>
        <dbReference type="Rhea" id="RHEA:18157"/>
        <dbReference type="ChEBI" id="CHEBI:15361"/>
        <dbReference type="ChEBI" id="CHEBI:15378"/>
        <dbReference type="ChEBI" id="CHEBI:30616"/>
        <dbReference type="ChEBI" id="CHEBI:58702"/>
        <dbReference type="ChEBI" id="CHEBI:456216"/>
        <dbReference type="EC" id="2.7.1.40"/>
    </reaction>
</comment>
<comment type="cofactor">
    <cofactor>
        <name>Mg(2+)</name>
        <dbReference type="ChEBI" id="CHEBI:18420"/>
    </cofactor>
</comment>
<comment type="cofactor">
    <cofactor>
        <name>K(+)</name>
        <dbReference type="ChEBI" id="CHEBI:29103"/>
    </cofactor>
</comment>
<comment type="pathway">
    <text>Carbohydrate degradation; glycolysis; pyruvate from D-glyceraldehyde 3-phosphate: step 5/5.</text>
</comment>
<comment type="subunit">
    <text evidence="1">Homotetramer.</text>
</comment>
<comment type="similarity">
    <text evidence="3">Belongs to the pyruvate kinase family.</text>
</comment>
<dbReference type="EC" id="2.7.1.40"/>
<dbReference type="EMBL" id="AE001363">
    <property type="protein sequence ID" value="AAD18250.1"/>
    <property type="molecule type" value="Genomic_DNA"/>
</dbReference>
<dbReference type="EMBL" id="AE002161">
    <property type="protein sequence ID" value="AAF38488.1"/>
    <property type="molecule type" value="Genomic_DNA"/>
</dbReference>
<dbReference type="EMBL" id="BA000008">
    <property type="protein sequence ID" value="BAA98307.1"/>
    <property type="molecule type" value="Genomic_DNA"/>
</dbReference>
<dbReference type="EMBL" id="AE009440">
    <property type="protein sequence ID" value="AAP98030.1"/>
    <property type="molecule type" value="Genomic_DNA"/>
</dbReference>
<dbReference type="PIR" id="A72119">
    <property type="entry name" value="A72119"/>
</dbReference>
<dbReference type="PIR" id="A86503">
    <property type="entry name" value="A86503"/>
</dbReference>
<dbReference type="RefSeq" id="NP_224305.1">
    <property type="nucleotide sequence ID" value="NC_000922.1"/>
</dbReference>
<dbReference type="RefSeq" id="WP_010882747.1">
    <property type="nucleotide sequence ID" value="NZ_LN847257.1"/>
</dbReference>
<dbReference type="SMR" id="Q9Z984"/>
<dbReference type="STRING" id="406984.CPK_ORF00607"/>
<dbReference type="GeneID" id="45050142"/>
<dbReference type="KEGG" id="cpa:CP_0677"/>
<dbReference type="KEGG" id="cpj:pyk"/>
<dbReference type="KEGG" id="cpn:CPn_0097"/>
<dbReference type="KEGG" id="cpt:CpB0097"/>
<dbReference type="PATRIC" id="fig|115713.3.peg.110"/>
<dbReference type="eggNOG" id="COG0469">
    <property type="taxonomic scope" value="Bacteria"/>
</dbReference>
<dbReference type="HOGENOM" id="CLU_015439_0_2_0"/>
<dbReference type="OrthoDB" id="9812123at2"/>
<dbReference type="UniPathway" id="UPA00109">
    <property type="reaction ID" value="UER00188"/>
</dbReference>
<dbReference type="Proteomes" id="UP000000583">
    <property type="component" value="Chromosome"/>
</dbReference>
<dbReference type="Proteomes" id="UP000000801">
    <property type="component" value="Chromosome"/>
</dbReference>
<dbReference type="GO" id="GO:0005524">
    <property type="term" value="F:ATP binding"/>
    <property type="evidence" value="ECO:0007669"/>
    <property type="project" value="UniProtKB-KW"/>
</dbReference>
<dbReference type="GO" id="GO:0016301">
    <property type="term" value="F:kinase activity"/>
    <property type="evidence" value="ECO:0007669"/>
    <property type="project" value="UniProtKB-KW"/>
</dbReference>
<dbReference type="GO" id="GO:0000287">
    <property type="term" value="F:magnesium ion binding"/>
    <property type="evidence" value="ECO:0007669"/>
    <property type="project" value="InterPro"/>
</dbReference>
<dbReference type="GO" id="GO:0030955">
    <property type="term" value="F:potassium ion binding"/>
    <property type="evidence" value="ECO:0007669"/>
    <property type="project" value="InterPro"/>
</dbReference>
<dbReference type="GO" id="GO:0004743">
    <property type="term" value="F:pyruvate kinase activity"/>
    <property type="evidence" value="ECO:0007669"/>
    <property type="project" value="UniProtKB-EC"/>
</dbReference>
<dbReference type="Gene3D" id="3.20.20.60">
    <property type="entry name" value="Phosphoenolpyruvate-binding domains"/>
    <property type="match status" value="1"/>
</dbReference>
<dbReference type="Gene3D" id="2.40.33.10">
    <property type="entry name" value="PK beta-barrel domain-like"/>
    <property type="match status" value="1"/>
</dbReference>
<dbReference type="Gene3D" id="3.40.1380.20">
    <property type="entry name" value="Pyruvate kinase, C-terminal domain"/>
    <property type="match status" value="1"/>
</dbReference>
<dbReference type="InterPro" id="IPR001697">
    <property type="entry name" value="Pyr_Knase"/>
</dbReference>
<dbReference type="InterPro" id="IPR015813">
    <property type="entry name" value="Pyrv/PenolPyrv_kinase-like_dom"/>
</dbReference>
<dbReference type="InterPro" id="IPR040442">
    <property type="entry name" value="Pyrv_kinase-like_dom_sf"/>
</dbReference>
<dbReference type="InterPro" id="IPR011037">
    <property type="entry name" value="Pyrv_Knase-like_insert_dom_sf"/>
</dbReference>
<dbReference type="InterPro" id="IPR015793">
    <property type="entry name" value="Pyrv_Knase_brl"/>
</dbReference>
<dbReference type="InterPro" id="IPR015795">
    <property type="entry name" value="Pyrv_Knase_C"/>
</dbReference>
<dbReference type="InterPro" id="IPR036918">
    <property type="entry name" value="Pyrv_Knase_C_sf"/>
</dbReference>
<dbReference type="InterPro" id="IPR015806">
    <property type="entry name" value="Pyrv_Knase_insert_dom_sf"/>
</dbReference>
<dbReference type="NCBIfam" id="NF004491">
    <property type="entry name" value="PRK05826.1"/>
    <property type="match status" value="1"/>
</dbReference>
<dbReference type="NCBIfam" id="TIGR01064">
    <property type="entry name" value="pyruv_kin"/>
    <property type="match status" value="1"/>
</dbReference>
<dbReference type="PANTHER" id="PTHR11817">
    <property type="entry name" value="PYRUVATE KINASE"/>
    <property type="match status" value="1"/>
</dbReference>
<dbReference type="Pfam" id="PF00224">
    <property type="entry name" value="PK"/>
    <property type="match status" value="1"/>
</dbReference>
<dbReference type="Pfam" id="PF02887">
    <property type="entry name" value="PK_C"/>
    <property type="match status" value="1"/>
</dbReference>
<dbReference type="PRINTS" id="PR01050">
    <property type="entry name" value="PYRUVTKNASE"/>
</dbReference>
<dbReference type="SUPFAM" id="SSF51621">
    <property type="entry name" value="Phosphoenolpyruvate/pyruvate domain"/>
    <property type="match status" value="1"/>
</dbReference>
<dbReference type="SUPFAM" id="SSF50800">
    <property type="entry name" value="PK beta-barrel domain-like"/>
    <property type="match status" value="1"/>
</dbReference>
<dbReference type="SUPFAM" id="SSF52935">
    <property type="entry name" value="PK C-terminal domain-like"/>
    <property type="match status" value="1"/>
</dbReference>
<evidence type="ECO:0000250" key="1"/>
<evidence type="ECO:0000250" key="2">
    <source>
        <dbReference type="UniProtKB" id="P14618"/>
    </source>
</evidence>
<evidence type="ECO:0000305" key="3"/>
<proteinExistence type="inferred from homology"/>
<protein>
    <recommendedName>
        <fullName>Pyruvate kinase</fullName>
        <shortName>PK</shortName>
        <ecNumber>2.7.1.40</ecNumber>
    </recommendedName>
</protein>
<sequence length="484" mass="52666">MITRTKIICTIGPATNSPEMLAKLLDAGMNVARLNFSHGSHETHGQAIGFLKELREQKRVPLAIMLDTKGPEIRLGNIPQPISVSQGQKLRLVSSDIDGSAEGGVSLYPKGIFPFVPEGADVLIDDGYIHAVVVSSEADSLELEFMNSGLLKSHKSLSIRGVDVALPFMTEKDIADLKFGVEQNMDVVAASFVRYGEDIETMRKCLADLGNPKMPIIAKIENRLGVENFSKIAKLADGIMIARGDLGIELSVVEVPNLQKMMAKVSRETGHFCVTATQMLESMIRNVLPTRAEVSDIANAIYDGSSAVMLSGETASGAHPVAAVKIMRSVILETEKNLSHDSFLKLDDSNSALQVSPYLSAIGLAGIQIAERADAKALIVYTESGSSPMFLSKYRPKFPIIAVTPSTSVYYRLALEWGVYPMLTQESDRAVWRHQACIYGIEQGILSNYDRILVLSRGACMEETNNLTLTIVNDILTGSEFPET</sequence>
<keyword id="KW-0067">ATP-binding</keyword>
<keyword id="KW-0324">Glycolysis</keyword>
<keyword id="KW-0418">Kinase</keyword>
<keyword id="KW-0460">Magnesium</keyword>
<keyword id="KW-0479">Metal-binding</keyword>
<keyword id="KW-0547">Nucleotide-binding</keyword>
<keyword id="KW-0630">Potassium</keyword>
<keyword id="KW-0670">Pyruvate</keyword>
<keyword id="KW-0808">Transferase</keyword>
<gene>
    <name type="primary">pyk</name>
    <name type="ordered locus">CPn_0097</name>
    <name type="ordered locus">CP_0677</name>
    <name type="ordered locus">CpB0097</name>
</gene>